<name>GNTK_XENTR</name>
<keyword id="KW-0067">ATP-binding</keyword>
<keyword id="KW-0418">Kinase</keyword>
<keyword id="KW-0547">Nucleotide-binding</keyword>
<keyword id="KW-1185">Reference proteome</keyword>
<keyword id="KW-0808">Transferase</keyword>
<accession>B0BML1</accession>
<protein>
    <recommendedName>
        <fullName>Probable gluconokinase</fullName>
        <ecNumber>2.7.1.12</ecNumber>
    </recommendedName>
    <alternativeName>
        <fullName>Gluconate kinase</fullName>
    </alternativeName>
</protein>
<organism>
    <name type="scientific">Xenopus tropicalis</name>
    <name type="common">Western clawed frog</name>
    <name type="synonym">Silurana tropicalis</name>
    <dbReference type="NCBI Taxonomy" id="8364"/>
    <lineage>
        <taxon>Eukaryota</taxon>
        <taxon>Metazoa</taxon>
        <taxon>Chordata</taxon>
        <taxon>Craniata</taxon>
        <taxon>Vertebrata</taxon>
        <taxon>Euteleostomi</taxon>
        <taxon>Amphibia</taxon>
        <taxon>Batrachia</taxon>
        <taxon>Anura</taxon>
        <taxon>Pipoidea</taxon>
        <taxon>Pipidae</taxon>
        <taxon>Xenopodinae</taxon>
        <taxon>Xenopus</taxon>
        <taxon>Silurana</taxon>
    </lineage>
</organism>
<feature type="chain" id="PRO_0000327373" description="Probable gluconokinase">
    <location>
        <begin position="1"/>
        <end position="190"/>
    </location>
</feature>
<feature type="binding site" evidence="1">
    <location>
        <begin position="7"/>
        <end position="14"/>
    </location>
    <ligand>
        <name>ATP</name>
        <dbReference type="ChEBI" id="CHEBI:30616"/>
    </ligand>
</feature>
<comment type="catalytic activity">
    <reaction>
        <text>D-gluconate + ATP = 6-phospho-D-gluconate + ADP + H(+)</text>
        <dbReference type="Rhea" id="RHEA:19433"/>
        <dbReference type="ChEBI" id="CHEBI:15378"/>
        <dbReference type="ChEBI" id="CHEBI:18391"/>
        <dbReference type="ChEBI" id="CHEBI:30616"/>
        <dbReference type="ChEBI" id="CHEBI:58759"/>
        <dbReference type="ChEBI" id="CHEBI:456216"/>
        <dbReference type="EC" id="2.7.1.12"/>
    </reaction>
</comment>
<comment type="pathway">
    <text>Carbohydrate acid metabolism; D-gluconate degradation.</text>
</comment>
<comment type="similarity">
    <text evidence="2">Belongs to the gluconokinase GntK/GntV family.</text>
</comment>
<gene>
    <name type="primary">idnk</name>
</gene>
<evidence type="ECO:0000255" key="1"/>
<evidence type="ECO:0000305" key="2"/>
<sequence length="190" mass="21540">MIIVIMGVSGSGKTVVGSQLAKKLGWNFYDADDYHPLENKEKMSQGTPLNDQDRHPWLCELHEIMMREKALGQHVVLACSALKRAYRSTLLTGSTPHWPENYQENDDLSSDTLFVHLHGSLEILSRRLLERKGHFMPRTLLDSQIDTLEPPSAPERFIAIDVDKDISVIVSEIEGEVDRKMMLVKSAQKD</sequence>
<proteinExistence type="evidence at transcript level"/>
<reference key="1">
    <citation type="submission" date="2008-01" db="EMBL/GenBank/DDBJ databases">
        <authorList>
            <consortium name="NIH - Xenopus Gene Collection (XGC) project"/>
        </authorList>
    </citation>
    <scope>NUCLEOTIDE SEQUENCE [LARGE SCALE MRNA]</scope>
    <source>
        <tissue>Testis</tissue>
    </source>
</reference>
<dbReference type="EC" id="2.7.1.12"/>
<dbReference type="EMBL" id="BC158476">
    <property type="protein sequence ID" value="AAI58477.1"/>
    <property type="molecule type" value="mRNA"/>
</dbReference>
<dbReference type="RefSeq" id="NP_001120064.1">
    <property type="nucleotide sequence ID" value="NM_001126592.1"/>
</dbReference>
<dbReference type="SMR" id="B0BML1"/>
<dbReference type="FunCoup" id="B0BML1">
    <property type="interactions" value="184"/>
</dbReference>
<dbReference type="STRING" id="8364.ENSXETP00000046879"/>
<dbReference type="PaxDb" id="8364-ENSXETP00000057500"/>
<dbReference type="GeneID" id="100145063"/>
<dbReference type="KEGG" id="xtr:100145063"/>
<dbReference type="AGR" id="Xenbase:XB-GENE-972317"/>
<dbReference type="CTD" id="414328"/>
<dbReference type="eggNOG" id="KOG3354">
    <property type="taxonomic scope" value="Eukaryota"/>
</dbReference>
<dbReference type="HOGENOM" id="CLU_077168_4_1_1"/>
<dbReference type="InParanoid" id="B0BML1"/>
<dbReference type="OMA" id="YEGDDYH"/>
<dbReference type="OrthoDB" id="275177at2759"/>
<dbReference type="UniPathway" id="UPA00792"/>
<dbReference type="Proteomes" id="UP000008143">
    <property type="component" value="Chromosome 1"/>
</dbReference>
<dbReference type="GO" id="GO:0005524">
    <property type="term" value="F:ATP binding"/>
    <property type="evidence" value="ECO:0007669"/>
    <property type="project" value="UniProtKB-KW"/>
</dbReference>
<dbReference type="GO" id="GO:0046316">
    <property type="term" value="F:gluconokinase activity"/>
    <property type="evidence" value="ECO:0007669"/>
    <property type="project" value="UniProtKB-EC"/>
</dbReference>
<dbReference type="GO" id="GO:0005975">
    <property type="term" value="P:carbohydrate metabolic process"/>
    <property type="evidence" value="ECO:0007669"/>
    <property type="project" value="InterPro"/>
</dbReference>
<dbReference type="CDD" id="cd02021">
    <property type="entry name" value="GntK"/>
    <property type="match status" value="1"/>
</dbReference>
<dbReference type="FunFam" id="3.40.50.300:FF:000522">
    <property type="entry name" value="Gluconokinase"/>
    <property type="match status" value="1"/>
</dbReference>
<dbReference type="Gene3D" id="3.40.50.300">
    <property type="entry name" value="P-loop containing nucleotide triphosphate hydrolases"/>
    <property type="match status" value="1"/>
</dbReference>
<dbReference type="InterPro" id="IPR027417">
    <property type="entry name" value="P-loop_NTPase"/>
</dbReference>
<dbReference type="InterPro" id="IPR031322">
    <property type="entry name" value="Shikimate/glucono_kinase"/>
</dbReference>
<dbReference type="InterPro" id="IPR006001">
    <property type="entry name" value="Therm_gnt_kin"/>
</dbReference>
<dbReference type="NCBIfam" id="TIGR01313">
    <property type="entry name" value="therm_gnt_kin"/>
    <property type="match status" value="1"/>
</dbReference>
<dbReference type="PANTHER" id="PTHR43442">
    <property type="entry name" value="GLUCONOKINASE-RELATED"/>
    <property type="match status" value="1"/>
</dbReference>
<dbReference type="PANTHER" id="PTHR43442:SF3">
    <property type="entry name" value="GLUCONOKINASE-RELATED"/>
    <property type="match status" value="1"/>
</dbReference>
<dbReference type="Pfam" id="PF01202">
    <property type="entry name" value="SKI"/>
    <property type="match status" value="1"/>
</dbReference>
<dbReference type="SUPFAM" id="SSF52540">
    <property type="entry name" value="P-loop containing nucleoside triphosphate hydrolases"/>
    <property type="match status" value="1"/>
</dbReference>